<organism>
    <name type="scientific">Shewanella baltica (strain OS223)</name>
    <dbReference type="NCBI Taxonomy" id="407976"/>
    <lineage>
        <taxon>Bacteria</taxon>
        <taxon>Pseudomonadati</taxon>
        <taxon>Pseudomonadota</taxon>
        <taxon>Gammaproteobacteria</taxon>
        <taxon>Alteromonadales</taxon>
        <taxon>Shewanellaceae</taxon>
        <taxon>Shewanella</taxon>
    </lineage>
</organism>
<keyword id="KW-0963">Cytoplasm</keyword>
<keyword id="KW-0238">DNA-binding</keyword>
<keyword id="KW-0677">Repeat</keyword>
<keyword id="KW-0804">Transcription</keyword>
<keyword id="KW-0805">Transcription regulation</keyword>
<proteinExistence type="inferred from homology"/>
<gene>
    <name evidence="1" type="primary">mraZ</name>
    <name type="ordered locus">Sbal223_0418</name>
</gene>
<feature type="chain" id="PRO_1000148868" description="Transcriptional regulator MraZ">
    <location>
        <begin position="1"/>
        <end position="152"/>
    </location>
</feature>
<feature type="domain" description="SpoVT-AbrB 1" evidence="2">
    <location>
        <begin position="5"/>
        <end position="52"/>
    </location>
</feature>
<feature type="domain" description="SpoVT-AbrB 2" evidence="2">
    <location>
        <begin position="81"/>
        <end position="124"/>
    </location>
</feature>
<protein>
    <recommendedName>
        <fullName>Transcriptional regulator MraZ</fullName>
    </recommendedName>
</protein>
<reference key="1">
    <citation type="submission" date="2008-12" db="EMBL/GenBank/DDBJ databases">
        <title>Complete sequence of chromosome of Shewanella baltica OS223.</title>
        <authorList>
            <consortium name="US DOE Joint Genome Institute"/>
            <person name="Lucas S."/>
            <person name="Copeland A."/>
            <person name="Lapidus A."/>
            <person name="Glavina del Rio T."/>
            <person name="Dalin E."/>
            <person name="Tice H."/>
            <person name="Bruce D."/>
            <person name="Goodwin L."/>
            <person name="Pitluck S."/>
            <person name="Chertkov O."/>
            <person name="Meincke L."/>
            <person name="Brettin T."/>
            <person name="Detter J.C."/>
            <person name="Han C."/>
            <person name="Kuske C.R."/>
            <person name="Larimer F."/>
            <person name="Land M."/>
            <person name="Hauser L."/>
            <person name="Kyrpides N."/>
            <person name="Ovchinnikova G."/>
            <person name="Brettar I."/>
            <person name="Rodrigues J."/>
            <person name="Konstantinidis K."/>
            <person name="Tiedje J."/>
        </authorList>
    </citation>
    <scope>NUCLEOTIDE SEQUENCE [LARGE SCALE GENOMIC DNA]</scope>
    <source>
        <strain>OS223</strain>
    </source>
</reference>
<comment type="subunit">
    <text evidence="1">Forms oligomers.</text>
</comment>
<comment type="subcellular location">
    <subcellularLocation>
        <location evidence="1">Cytoplasm</location>
        <location evidence="1">Nucleoid</location>
    </subcellularLocation>
</comment>
<comment type="similarity">
    <text evidence="1">Belongs to the MraZ family.</text>
</comment>
<sequence length="152" mass="17637">MFRGASAINLDTKGRIAIPVRYREPLQLEHQGRIVITVDIQSACLLLYPIHEWELIEAKLLKLSDTDKTQRSLKRLLLGYAHEVELDGNGRILLPPPLRQYANLDKRIMLVGQLNKFELWDEQSWLQQIDECQETIRSEELASNERLADFSL</sequence>
<accession>B8E4L1</accession>
<dbReference type="EMBL" id="CP001252">
    <property type="protein sequence ID" value="ACK44952.1"/>
    <property type="molecule type" value="Genomic_DNA"/>
</dbReference>
<dbReference type="RefSeq" id="WP_011982222.1">
    <property type="nucleotide sequence ID" value="NC_011663.1"/>
</dbReference>
<dbReference type="SMR" id="B8E4L1"/>
<dbReference type="KEGG" id="sbp:Sbal223_0418"/>
<dbReference type="HOGENOM" id="CLU_107907_2_0_6"/>
<dbReference type="Proteomes" id="UP000002507">
    <property type="component" value="Chromosome"/>
</dbReference>
<dbReference type="GO" id="GO:0005737">
    <property type="term" value="C:cytoplasm"/>
    <property type="evidence" value="ECO:0007669"/>
    <property type="project" value="UniProtKB-UniRule"/>
</dbReference>
<dbReference type="GO" id="GO:0009295">
    <property type="term" value="C:nucleoid"/>
    <property type="evidence" value="ECO:0007669"/>
    <property type="project" value="UniProtKB-SubCell"/>
</dbReference>
<dbReference type="GO" id="GO:0003700">
    <property type="term" value="F:DNA-binding transcription factor activity"/>
    <property type="evidence" value="ECO:0007669"/>
    <property type="project" value="UniProtKB-UniRule"/>
</dbReference>
<dbReference type="GO" id="GO:0000976">
    <property type="term" value="F:transcription cis-regulatory region binding"/>
    <property type="evidence" value="ECO:0007669"/>
    <property type="project" value="TreeGrafter"/>
</dbReference>
<dbReference type="GO" id="GO:2000143">
    <property type="term" value="P:negative regulation of DNA-templated transcription initiation"/>
    <property type="evidence" value="ECO:0007669"/>
    <property type="project" value="TreeGrafter"/>
</dbReference>
<dbReference type="CDD" id="cd16321">
    <property type="entry name" value="MraZ_C"/>
    <property type="match status" value="1"/>
</dbReference>
<dbReference type="CDD" id="cd16320">
    <property type="entry name" value="MraZ_N"/>
    <property type="match status" value="1"/>
</dbReference>
<dbReference type="FunFam" id="3.40.1550.20:FF:000001">
    <property type="entry name" value="Transcriptional regulator MraZ"/>
    <property type="match status" value="1"/>
</dbReference>
<dbReference type="Gene3D" id="3.40.1550.20">
    <property type="entry name" value="Transcriptional regulator MraZ domain"/>
    <property type="match status" value="1"/>
</dbReference>
<dbReference type="HAMAP" id="MF_01008">
    <property type="entry name" value="MraZ"/>
    <property type="match status" value="1"/>
</dbReference>
<dbReference type="InterPro" id="IPR003444">
    <property type="entry name" value="MraZ"/>
</dbReference>
<dbReference type="InterPro" id="IPR035644">
    <property type="entry name" value="MraZ_C"/>
</dbReference>
<dbReference type="InterPro" id="IPR020603">
    <property type="entry name" value="MraZ_dom"/>
</dbReference>
<dbReference type="InterPro" id="IPR035642">
    <property type="entry name" value="MraZ_N"/>
</dbReference>
<dbReference type="InterPro" id="IPR038619">
    <property type="entry name" value="MraZ_sf"/>
</dbReference>
<dbReference type="InterPro" id="IPR007159">
    <property type="entry name" value="SpoVT-AbrB_dom"/>
</dbReference>
<dbReference type="InterPro" id="IPR037914">
    <property type="entry name" value="SpoVT-AbrB_sf"/>
</dbReference>
<dbReference type="NCBIfam" id="TIGR00242">
    <property type="entry name" value="division/cell wall cluster transcriptional repressor MraZ"/>
    <property type="match status" value="1"/>
</dbReference>
<dbReference type="PANTHER" id="PTHR34701">
    <property type="entry name" value="TRANSCRIPTIONAL REGULATOR MRAZ"/>
    <property type="match status" value="1"/>
</dbReference>
<dbReference type="PANTHER" id="PTHR34701:SF1">
    <property type="entry name" value="TRANSCRIPTIONAL REGULATOR MRAZ"/>
    <property type="match status" value="1"/>
</dbReference>
<dbReference type="Pfam" id="PF02381">
    <property type="entry name" value="MraZ"/>
    <property type="match status" value="2"/>
</dbReference>
<dbReference type="SUPFAM" id="SSF89447">
    <property type="entry name" value="AbrB/MazE/MraZ-like"/>
    <property type="match status" value="1"/>
</dbReference>
<dbReference type="PROSITE" id="PS51740">
    <property type="entry name" value="SPOVT_ABRB"/>
    <property type="match status" value="2"/>
</dbReference>
<evidence type="ECO:0000255" key="1">
    <source>
        <dbReference type="HAMAP-Rule" id="MF_01008"/>
    </source>
</evidence>
<evidence type="ECO:0000255" key="2">
    <source>
        <dbReference type="PROSITE-ProRule" id="PRU01076"/>
    </source>
</evidence>
<name>MRAZ_SHEB2</name>